<protein>
    <recommendedName>
        <fullName>Interferon alpha-6</fullName>
        <shortName>IFN-alpha-6</shortName>
    </recommendedName>
    <alternativeName>
        <fullName>Interferon alpha-54</fullName>
    </alternativeName>
    <alternativeName>
        <fullName>Interferon alpha-K</fullName>
        <shortName>LeIF K</shortName>
    </alternativeName>
</protein>
<accession>P05013</accession>
<accession>Q5VYQ1</accession>
<proteinExistence type="evidence at protein level"/>
<evidence type="ECO:0000250" key="1"/>
<evidence type="ECO:0000269" key="2">
    <source>
    </source>
</evidence>
<evidence type="ECO:0000305" key="3"/>
<feature type="signal peptide" evidence="2">
    <location>
        <begin position="1"/>
        <end position="20"/>
    </location>
</feature>
<feature type="chain" id="PRO_0000016363" description="Interferon alpha-6">
    <location>
        <begin position="21"/>
        <end position="189"/>
    </location>
</feature>
<feature type="disulfide bond" evidence="1">
    <location>
        <begin position="24"/>
        <end position="122"/>
    </location>
</feature>
<feature type="disulfide bond" evidence="1">
    <location>
        <begin position="52"/>
        <end position="162"/>
    </location>
</feature>
<organism>
    <name type="scientific">Homo sapiens</name>
    <name type="common">Human</name>
    <dbReference type="NCBI Taxonomy" id="9606"/>
    <lineage>
        <taxon>Eukaryota</taxon>
        <taxon>Metazoa</taxon>
        <taxon>Chordata</taxon>
        <taxon>Craniata</taxon>
        <taxon>Vertebrata</taxon>
        <taxon>Euteleostomi</taxon>
        <taxon>Mammalia</taxon>
        <taxon>Eutheria</taxon>
        <taxon>Euarchontoglires</taxon>
        <taxon>Primates</taxon>
        <taxon>Haplorrhini</taxon>
        <taxon>Catarrhini</taxon>
        <taxon>Hominidae</taxon>
        <taxon>Homo</taxon>
    </lineage>
</organism>
<keyword id="KW-0051">Antiviral defense</keyword>
<keyword id="KW-0202">Cytokine</keyword>
<keyword id="KW-0903">Direct protein sequencing</keyword>
<keyword id="KW-1015">Disulfide bond</keyword>
<keyword id="KW-1267">Proteomics identification</keyword>
<keyword id="KW-1185">Reference proteome</keyword>
<keyword id="KW-0964">Secreted</keyword>
<keyword id="KW-0732">Signal</keyword>
<reference key="1">
    <citation type="journal article" date="1985" name="J. Mol. Biol.">
        <title>Structural relationship of human interferon alpha genes and pseudogenes.</title>
        <authorList>
            <person name="Henco K."/>
            <person name="Brosius J."/>
            <person name="Fujisawa A."/>
            <person name="Fujisawa J."/>
            <person name="Haynes J.R."/>
            <person name="Hochstadt J."/>
            <person name="Kovacic T."/>
            <person name="Pasek M."/>
            <person name="Schamboeck A."/>
            <person name="Schmid J."/>
            <person name="Todokoro K."/>
            <person name="Waelchli M."/>
            <person name="Nagata S."/>
            <person name="Weissmann C."/>
        </authorList>
    </citation>
    <scope>NUCLEOTIDE SEQUENCE [GENOMIC DNA]</scope>
</reference>
<reference key="2">
    <citation type="journal article" date="2004" name="Nature">
        <title>DNA sequence and analysis of human chromosome 9.</title>
        <authorList>
            <person name="Humphray S.J."/>
            <person name="Oliver K."/>
            <person name="Hunt A.R."/>
            <person name="Plumb R.W."/>
            <person name="Loveland J.E."/>
            <person name="Howe K.L."/>
            <person name="Andrews T.D."/>
            <person name="Searle S."/>
            <person name="Hunt S.E."/>
            <person name="Scott C.E."/>
            <person name="Jones M.C."/>
            <person name="Ainscough R."/>
            <person name="Almeida J.P."/>
            <person name="Ambrose K.D."/>
            <person name="Ashwell R.I.S."/>
            <person name="Babbage A.K."/>
            <person name="Babbage S."/>
            <person name="Bagguley C.L."/>
            <person name="Bailey J."/>
            <person name="Banerjee R."/>
            <person name="Barker D.J."/>
            <person name="Barlow K.F."/>
            <person name="Bates K."/>
            <person name="Beasley H."/>
            <person name="Beasley O."/>
            <person name="Bird C.P."/>
            <person name="Bray-Allen S."/>
            <person name="Brown A.J."/>
            <person name="Brown J.Y."/>
            <person name="Burford D."/>
            <person name="Burrill W."/>
            <person name="Burton J."/>
            <person name="Carder C."/>
            <person name="Carter N.P."/>
            <person name="Chapman J.C."/>
            <person name="Chen Y."/>
            <person name="Clarke G."/>
            <person name="Clark S.Y."/>
            <person name="Clee C.M."/>
            <person name="Clegg S."/>
            <person name="Collier R.E."/>
            <person name="Corby N."/>
            <person name="Crosier M."/>
            <person name="Cummings A.T."/>
            <person name="Davies J."/>
            <person name="Dhami P."/>
            <person name="Dunn M."/>
            <person name="Dutta I."/>
            <person name="Dyer L.W."/>
            <person name="Earthrowl M.E."/>
            <person name="Faulkner L."/>
            <person name="Fleming C.J."/>
            <person name="Frankish A."/>
            <person name="Frankland J.A."/>
            <person name="French L."/>
            <person name="Fricker D.G."/>
            <person name="Garner P."/>
            <person name="Garnett J."/>
            <person name="Ghori J."/>
            <person name="Gilbert J.G.R."/>
            <person name="Glison C."/>
            <person name="Grafham D.V."/>
            <person name="Gribble S."/>
            <person name="Griffiths C."/>
            <person name="Griffiths-Jones S."/>
            <person name="Grocock R."/>
            <person name="Guy J."/>
            <person name="Hall R.E."/>
            <person name="Hammond S."/>
            <person name="Harley J.L."/>
            <person name="Harrison E.S.I."/>
            <person name="Hart E.A."/>
            <person name="Heath P.D."/>
            <person name="Henderson C.D."/>
            <person name="Hopkins B.L."/>
            <person name="Howard P.J."/>
            <person name="Howden P.J."/>
            <person name="Huckle E."/>
            <person name="Johnson C."/>
            <person name="Johnson D."/>
            <person name="Joy A.A."/>
            <person name="Kay M."/>
            <person name="Keenan S."/>
            <person name="Kershaw J.K."/>
            <person name="Kimberley A.M."/>
            <person name="King A."/>
            <person name="Knights A."/>
            <person name="Laird G.K."/>
            <person name="Langford C."/>
            <person name="Lawlor S."/>
            <person name="Leongamornlert D.A."/>
            <person name="Leversha M."/>
            <person name="Lloyd C."/>
            <person name="Lloyd D.M."/>
            <person name="Lovell J."/>
            <person name="Martin S."/>
            <person name="Mashreghi-Mohammadi M."/>
            <person name="Matthews L."/>
            <person name="McLaren S."/>
            <person name="McLay K.E."/>
            <person name="McMurray A."/>
            <person name="Milne S."/>
            <person name="Nickerson T."/>
            <person name="Nisbett J."/>
            <person name="Nordsiek G."/>
            <person name="Pearce A.V."/>
            <person name="Peck A.I."/>
            <person name="Porter K.M."/>
            <person name="Pandian R."/>
            <person name="Pelan S."/>
            <person name="Phillimore B."/>
            <person name="Povey S."/>
            <person name="Ramsey Y."/>
            <person name="Rand V."/>
            <person name="Scharfe M."/>
            <person name="Sehra H.K."/>
            <person name="Shownkeen R."/>
            <person name="Sims S.K."/>
            <person name="Skuce C.D."/>
            <person name="Smith M."/>
            <person name="Steward C.A."/>
            <person name="Swarbreck D."/>
            <person name="Sycamore N."/>
            <person name="Tester J."/>
            <person name="Thorpe A."/>
            <person name="Tracey A."/>
            <person name="Tromans A."/>
            <person name="Thomas D.W."/>
            <person name="Wall M."/>
            <person name="Wallis J.M."/>
            <person name="West A.P."/>
            <person name="Whitehead S.L."/>
            <person name="Willey D.L."/>
            <person name="Williams S.A."/>
            <person name="Wilming L."/>
            <person name="Wray P.W."/>
            <person name="Young L."/>
            <person name="Ashurst J.L."/>
            <person name="Coulson A."/>
            <person name="Blocker H."/>
            <person name="Durbin R.M."/>
            <person name="Sulston J.E."/>
            <person name="Hubbard T."/>
            <person name="Jackson M.J."/>
            <person name="Bentley D.R."/>
            <person name="Beck S."/>
            <person name="Rogers J."/>
            <person name="Dunham I."/>
        </authorList>
    </citation>
    <scope>NUCLEOTIDE SEQUENCE [LARGE SCALE GENOMIC DNA]</scope>
</reference>
<reference key="3">
    <citation type="submission" date="2005-07" db="EMBL/GenBank/DDBJ databases">
        <authorList>
            <person name="Mural R.J."/>
            <person name="Istrail S."/>
            <person name="Sutton G."/>
            <person name="Florea L."/>
            <person name="Halpern A.L."/>
            <person name="Mobarry C.M."/>
            <person name="Lippert R."/>
            <person name="Walenz B."/>
            <person name="Shatkay H."/>
            <person name="Dew I."/>
            <person name="Miller J.R."/>
            <person name="Flanigan M.J."/>
            <person name="Edwards N.J."/>
            <person name="Bolanos R."/>
            <person name="Fasulo D."/>
            <person name="Halldorsson B.V."/>
            <person name="Hannenhalli S."/>
            <person name="Turner R."/>
            <person name="Yooseph S."/>
            <person name="Lu F."/>
            <person name="Nusskern D.R."/>
            <person name="Shue B.C."/>
            <person name="Zheng X.H."/>
            <person name="Zhong F."/>
            <person name="Delcher A.L."/>
            <person name="Huson D.H."/>
            <person name="Kravitz S.A."/>
            <person name="Mouchard L."/>
            <person name="Reinert K."/>
            <person name="Remington K.A."/>
            <person name="Clark A.G."/>
            <person name="Waterman M.S."/>
            <person name="Eichler E.E."/>
            <person name="Adams M.D."/>
            <person name="Hunkapiller M.W."/>
            <person name="Myers E.W."/>
            <person name="Venter J.C."/>
        </authorList>
    </citation>
    <scope>NUCLEOTIDE SEQUENCE [LARGE SCALE GENOMIC DNA]</scope>
</reference>
<reference key="4">
    <citation type="journal article" date="2004" name="Genome Res.">
        <title>The status, quality, and expansion of the NIH full-length cDNA project: the Mammalian Gene Collection (MGC).</title>
        <authorList>
            <consortium name="The MGC Project Team"/>
        </authorList>
    </citation>
    <scope>NUCLEOTIDE SEQUENCE [LARGE SCALE MRNA]</scope>
</reference>
<reference key="5">
    <citation type="journal article" date="2004" name="Protein Sci.">
        <title>Signal peptide prediction based on analysis of experimentally verified cleavage sites.</title>
        <authorList>
            <person name="Zhang Z."/>
            <person name="Henzel W.J."/>
        </authorList>
    </citation>
    <scope>PROTEIN SEQUENCE OF 21-35</scope>
</reference>
<name>IFNA6_HUMAN</name>
<gene>
    <name type="primary">IFNA6</name>
</gene>
<comment type="function">
    <text>Produced by macrophages, IFN-alpha have antiviral activities. Interferon stimulates the production of two enzymes: a protein kinase and an oligoadenylate synthetase.</text>
</comment>
<comment type="interaction">
    <interactant intactId="EBI-14133376">
        <id>P05013</id>
    </interactant>
    <interactant intactId="EBI-16439278">
        <id>Q6FHY5</id>
        <label>MEOX2</label>
    </interactant>
    <organismsDiffer>false</organismsDiffer>
    <experiments>3</experiments>
</comment>
<comment type="subcellular location">
    <subcellularLocation>
        <location>Secreted</location>
    </subcellularLocation>
</comment>
<comment type="similarity">
    <text evidence="3">Belongs to the alpha/beta interferon family.</text>
</comment>
<sequence length="189" mass="22141">MALPFALLMALVVLSCKSSCSLDCDLPQTHSLGHRRTMMLLAQMRRISLFSCLKDRHDFRFPQEEFDGNQFQKAEAISVLHEVIQQTFNLFSTKDSSVAWDERLLDKLYTELYQQLNDLEACVMQEVWVGGTPLMNEDSILAVRKYFQRITLYLTEKKYSPCAWEVVRAEIMRSFSSSRNLQERLRRKE</sequence>
<dbReference type="EMBL" id="X02958">
    <property type="protein sequence ID" value="CAA26704.1"/>
    <property type="molecule type" value="Genomic_DNA"/>
</dbReference>
<dbReference type="EMBL" id="AL353732">
    <property type="status" value="NOT_ANNOTATED_CDS"/>
    <property type="molecule type" value="Genomic_DNA"/>
</dbReference>
<dbReference type="EMBL" id="CH471071">
    <property type="protein sequence ID" value="EAW58613.1"/>
    <property type="molecule type" value="Genomic_DNA"/>
</dbReference>
<dbReference type="EMBL" id="BC069471">
    <property type="protein sequence ID" value="AAH69471.1"/>
    <property type="molecule type" value="mRNA"/>
</dbReference>
<dbReference type="EMBL" id="BC096697">
    <property type="protein sequence ID" value="AAH96697.1"/>
    <property type="molecule type" value="mRNA"/>
</dbReference>
<dbReference type="EMBL" id="BC096710">
    <property type="protein sequence ID" value="AAH96710.1"/>
    <property type="molecule type" value="mRNA"/>
</dbReference>
<dbReference type="EMBL" id="BC096730">
    <property type="protein sequence ID" value="AAH96730.1"/>
    <property type="molecule type" value="mRNA"/>
</dbReference>
<dbReference type="EMBL" id="BC098357">
    <property type="protein sequence ID" value="AAH98357.1"/>
    <property type="molecule type" value="mRNA"/>
</dbReference>
<dbReference type="CCDS" id="CCDS6504.1"/>
<dbReference type="PIR" id="A23753">
    <property type="entry name" value="IVHUI6"/>
</dbReference>
<dbReference type="RefSeq" id="NP_066282.1">
    <property type="nucleotide sequence ID" value="NM_021002.2"/>
</dbReference>
<dbReference type="SMR" id="P05013"/>
<dbReference type="BioGRID" id="109666">
    <property type="interactions" value="7"/>
</dbReference>
<dbReference type="ComplexPortal" id="CPX-6000">
    <property type="entry name" value="Interferon alpha receptor-ligand complex, IFNA6 variant"/>
</dbReference>
<dbReference type="FunCoup" id="P05013">
    <property type="interactions" value="935"/>
</dbReference>
<dbReference type="IntAct" id="P05013">
    <property type="interactions" value="7"/>
</dbReference>
<dbReference type="STRING" id="9606.ENSP00000369558"/>
<dbReference type="ChEMBL" id="CHEMBL3856161"/>
<dbReference type="iPTMnet" id="P05013"/>
<dbReference type="PhosphoSitePlus" id="P05013"/>
<dbReference type="BioMuta" id="IFNA6"/>
<dbReference type="DMDM" id="124460"/>
<dbReference type="MassIVE" id="P05013"/>
<dbReference type="PaxDb" id="9606-ENSP00000369558"/>
<dbReference type="PeptideAtlas" id="P05013"/>
<dbReference type="ABCD" id="P05013">
    <property type="antibodies" value="6 sequenced antibodies"/>
</dbReference>
<dbReference type="Antibodypedia" id="24870">
    <property type="antibodies" value="185 antibodies from 24 providers"/>
</dbReference>
<dbReference type="DNASU" id="3443"/>
<dbReference type="Ensembl" id="ENST00000380210.2">
    <property type="protein sequence ID" value="ENSP00000369558.1"/>
    <property type="gene ID" value="ENSG00000120235.5"/>
</dbReference>
<dbReference type="GeneID" id="3443"/>
<dbReference type="KEGG" id="hsa:3443"/>
<dbReference type="MANE-Select" id="ENST00000380210.2">
    <property type="protein sequence ID" value="ENSP00000369558.1"/>
    <property type="RefSeq nucleotide sequence ID" value="NM_021002.2"/>
    <property type="RefSeq protein sequence ID" value="NP_066282.1"/>
</dbReference>
<dbReference type="UCSC" id="uc011lni.3">
    <property type="organism name" value="human"/>
</dbReference>
<dbReference type="AGR" id="HGNC:5427"/>
<dbReference type="CTD" id="3443"/>
<dbReference type="DisGeNET" id="3443"/>
<dbReference type="GeneCards" id="IFNA6"/>
<dbReference type="HGNC" id="HGNC:5427">
    <property type="gene designation" value="IFNA6"/>
</dbReference>
<dbReference type="HPA" id="ENSG00000120235">
    <property type="expression patterns" value="Not detected"/>
</dbReference>
<dbReference type="MIM" id="147566">
    <property type="type" value="gene"/>
</dbReference>
<dbReference type="neXtProt" id="NX_P05013"/>
<dbReference type="OpenTargets" id="ENSG00000120235"/>
<dbReference type="PharmGKB" id="PA29666"/>
<dbReference type="VEuPathDB" id="HostDB:ENSG00000120235"/>
<dbReference type="eggNOG" id="ENOG502SQAC">
    <property type="taxonomic scope" value="Eukaryota"/>
</dbReference>
<dbReference type="GeneTree" id="ENSGT01000000214430"/>
<dbReference type="InParanoid" id="P05013"/>
<dbReference type="OMA" id="RYDFRFP"/>
<dbReference type="OrthoDB" id="9481177at2759"/>
<dbReference type="PAN-GO" id="P05013">
    <property type="GO annotations" value="12 GO annotations based on evolutionary models"/>
</dbReference>
<dbReference type="PhylomeDB" id="P05013"/>
<dbReference type="TreeFam" id="TF336177"/>
<dbReference type="PathwayCommons" id="P05013"/>
<dbReference type="Reactome" id="R-HSA-909733">
    <property type="pathway name" value="Interferon alpha/beta signaling"/>
</dbReference>
<dbReference type="Reactome" id="R-HSA-912694">
    <property type="pathway name" value="Regulation of IFNA/IFNB signaling"/>
</dbReference>
<dbReference type="Reactome" id="R-HSA-933541">
    <property type="pathway name" value="TRAF6 mediated IRF7 activation"/>
</dbReference>
<dbReference type="Reactome" id="R-HSA-9705671">
    <property type="pathway name" value="SARS-CoV-2 activates/modulates innate and adaptive immune responses"/>
</dbReference>
<dbReference type="Reactome" id="R-HSA-983231">
    <property type="pathway name" value="Factors involved in megakaryocyte development and platelet production"/>
</dbReference>
<dbReference type="Reactome" id="R-HSA-9833109">
    <property type="pathway name" value="Evasion by RSV of host interferon responses"/>
</dbReference>
<dbReference type="SignaLink" id="P05013"/>
<dbReference type="BioGRID-ORCS" id="3443">
    <property type="hits" value="7 hits in 1064 CRISPR screens"/>
</dbReference>
<dbReference type="GeneWiki" id="IFNA6"/>
<dbReference type="GenomeRNAi" id="3443"/>
<dbReference type="Pharos" id="P05013">
    <property type="development level" value="Tbio"/>
</dbReference>
<dbReference type="PRO" id="PR:P05013"/>
<dbReference type="Proteomes" id="UP000005640">
    <property type="component" value="Chromosome 9"/>
</dbReference>
<dbReference type="RNAct" id="P05013">
    <property type="molecule type" value="protein"/>
</dbReference>
<dbReference type="Bgee" id="ENSG00000120235">
    <property type="expression patterns" value="Expressed in putamen and 20 other cell types or tissues"/>
</dbReference>
<dbReference type="ExpressionAtlas" id="P05013">
    <property type="expression patterns" value="baseline and differential"/>
</dbReference>
<dbReference type="GO" id="GO:0005576">
    <property type="term" value="C:extracellular region"/>
    <property type="evidence" value="ECO:0000304"/>
    <property type="project" value="Reactome"/>
</dbReference>
<dbReference type="GO" id="GO:0005615">
    <property type="term" value="C:extracellular space"/>
    <property type="evidence" value="ECO:0000318"/>
    <property type="project" value="GO_Central"/>
</dbReference>
<dbReference type="GO" id="GO:0005125">
    <property type="term" value="F:cytokine activity"/>
    <property type="evidence" value="ECO:0000318"/>
    <property type="project" value="GO_Central"/>
</dbReference>
<dbReference type="GO" id="GO:0005132">
    <property type="term" value="F:type I interferon receptor binding"/>
    <property type="evidence" value="ECO:0000318"/>
    <property type="project" value="GO_Central"/>
</dbReference>
<dbReference type="GO" id="GO:0002250">
    <property type="term" value="P:adaptive immune response"/>
    <property type="evidence" value="ECO:0000318"/>
    <property type="project" value="GO_Central"/>
</dbReference>
<dbReference type="GO" id="GO:0002312">
    <property type="term" value="P:B cell activation involved in immune response"/>
    <property type="evidence" value="ECO:0000318"/>
    <property type="project" value="GO_Central"/>
</dbReference>
<dbReference type="GO" id="GO:0098586">
    <property type="term" value="P:cellular response to virus"/>
    <property type="evidence" value="ECO:0000303"/>
    <property type="project" value="ComplexPortal"/>
</dbReference>
<dbReference type="GO" id="GO:0051607">
    <property type="term" value="P:defense response to virus"/>
    <property type="evidence" value="ECO:0007669"/>
    <property type="project" value="UniProtKB-KW"/>
</dbReference>
<dbReference type="GO" id="GO:0006959">
    <property type="term" value="P:humoral immune response"/>
    <property type="evidence" value="ECO:0000318"/>
    <property type="project" value="GO_Central"/>
</dbReference>
<dbReference type="GO" id="GO:0002323">
    <property type="term" value="P:natural killer cell activation involved in immune response"/>
    <property type="evidence" value="ECO:0000318"/>
    <property type="project" value="GO_Central"/>
</dbReference>
<dbReference type="GO" id="GO:0043330">
    <property type="term" value="P:response to exogenous dsRNA"/>
    <property type="evidence" value="ECO:0000318"/>
    <property type="project" value="GO_Central"/>
</dbReference>
<dbReference type="GO" id="GO:0002286">
    <property type="term" value="P:T cell activation involved in immune response"/>
    <property type="evidence" value="ECO:0000318"/>
    <property type="project" value="GO_Central"/>
</dbReference>
<dbReference type="GO" id="GO:0060337">
    <property type="term" value="P:type I interferon-mediated signaling pathway"/>
    <property type="evidence" value="ECO:0000318"/>
    <property type="project" value="GO_Central"/>
</dbReference>
<dbReference type="CDD" id="cd00095">
    <property type="entry name" value="IFab"/>
    <property type="match status" value="1"/>
</dbReference>
<dbReference type="FunFam" id="1.20.1250.10:FF:000001">
    <property type="entry name" value="Interferon alpha"/>
    <property type="match status" value="1"/>
</dbReference>
<dbReference type="Gene3D" id="1.20.1250.10">
    <property type="match status" value="1"/>
</dbReference>
<dbReference type="InterPro" id="IPR009079">
    <property type="entry name" value="4_helix_cytokine-like_core"/>
</dbReference>
<dbReference type="InterPro" id="IPR000471">
    <property type="entry name" value="Interferon_alpha/beta/delta"/>
</dbReference>
<dbReference type="PANTHER" id="PTHR11691:SF27">
    <property type="entry name" value="INTERFERON ALPHA-6"/>
    <property type="match status" value="1"/>
</dbReference>
<dbReference type="PANTHER" id="PTHR11691">
    <property type="entry name" value="TYPE I INTERFERON"/>
    <property type="match status" value="1"/>
</dbReference>
<dbReference type="Pfam" id="PF00143">
    <property type="entry name" value="Interferon"/>
    <property type="match status" value="1"/>
</dbReference>
<dbReference type="PRINTS" id="PR00266">
    <property type="entry name" value="INTERFERONAB"/>
</dbReference>
<dbReference type="SMART" id="SM00076">
    <property type="entry name" value="IFabd"/>
    <property type="match status" value="1"/>
</dbReference>
<dbReference type="SUPFAM" id="SSF47266">
    <property type="entry name" value="4-helical cytokines"/>
    <property type="match status" value="1"/>
</dbReference>
<dbReference type="PROSITE" id="PS00252">
    <property type="entry name" value="INTERFERON_A_B_D"/>
    <property type="match status" value="1"/>
</dbReference>